<keyword id="KW-0204">Cytolysis</keyword>
<keyword id="KW-1061">Dermonecrotic toxin</keyword>
<keyword id="KW-1015">Disulfide bond</keyword>
<keyword id="KW-0354">Hemolysis</keyword>
<keyword id="KW-0442">Lipid degradation</keyword>
<keyword id="KW-0443">Lipid metabolism</keyword>
<keyword id="KW-0456">Lyase</keyword>
<keyword id="KW-0460">Magnesium</keyword>
<keyword id="KW-0479">Metal-binding</keyword>
<keyword id="KW-0964">Secreted</keyword>
<keyword id="KW-0800">Toxin</keyword>
<name>A1OB5_LOXVA</name>
<feature type="chain" id="PRO_0000392814" description="Dermonecrotic toxin LvSicTox-alphaIC1bv">
    <location>
        <begin position="1" status="less than"/>
        <end position="272"/>
    </location>
</feature>
<feature type="active site" evidence="5">
    <location>
        <position position="5"/>
    </location>
</feature>
<feature type="active site" description="Nucleophile" evidence="5">
    <location>
        <position position="41"/>
    </location>
</feature>
<feature type="binding site" evidence="5">
    <location>
        <position position="25"/>
    </location>
    <ligand>
        <name>Mg(2+)</name>
        <dbReference type="ChEBI" id="CHEBI:18420"/>
    </ligand>
</feature>
<feature type="binding site" evidence="5">
    <location>
        <position position="27"/>
    </location>
    <ligand>
        <name>Mg(2+)</name>
        <dbReference type="ChEBI" id="CHEBI:18420"/>
    </ligand>
</feature>
<feature type="binding site" evidence="5">
    <location>
        <position position="84"/>
    </location>
    <ligand>
        <name>Mg(2+)</name>
        <dbReference type="ChEBI" id="CHEBI:18420"/>
    </ligand>
</feature>
<feature type="disulfide bond" evidence="3">
    <location>
        <begin position="45"/>
        <end position="51"/>
    </location>
</feature>
<feature type="disulfide bond" evidence="3">
    <location>
        <begin position="47"/>
        <end position="189"/>
    </location>
</feature>
<feature type="non-terminal residue">
    <location>
        <position position="1"/>
    </location>
</feature>
<evidence type="ECO:0000250" key="1">
    <source>
        <dbReference type="UniProtKB" id="A0A0D4WTV1"/>
    </source>
</evidence>
<evidence type="ECO:0000250" key="2">
    <source>
        <dbReference type="UniProtKB" id="A0A0D4WV12"/>
    </source>
</evidence>
<evidence type="ECO:0000250" key="3">
    <source>
        <dbReference type="UniProtKB" id="P0CE80"/>
    </source>
</evidence>
<evidence type="ECO:0000250" key="4">
    <source>
        <dbReference type="UniProtKB" id="Q4ZFU2"/>
    </source>
</evidence>
<evidence type="ECO:0000250" key="5">
    <source>
        <dbReference type="UniProtKB" id="Q8I914"/>
    </source>
</evidence>
<evidence type="ECO:0000303" key="6">
    <source>
    </source>
</evidence>
<evidence type="ECO:0000305" key="7"/>
<evidence type="ECO:0000305" key="8">
    <source>
    </source>
</evidence>
<dbReference type="EC" id="4.6.1.-" evidence="4"/>
<dbReference type="EMBL" id="FJ171433">
    <property type="protein sequence ID" value="ACN48929.1"/>
    <property type="molecule type" value="mRNA"/>
</dbReference>
<dbReference type="SMR" id="C0JAZ8"/>
<dbReference type="GO" id="GO:0005576">
    <property type="term" value="C:extracellular region"/>
    <property type="evidence" value="ECO:0007669"/>
    <property type="project" value="UniProtKB-SubCell"/>
</dbReference>
<dbReference type="GO" id="GO:0016829">
    <property type="term" value="F:lyase activity"/>
    <property type="evidence" value="ECO:0007669"/>
    <property type="project" value="UniProtKB-KW"/>
</dbReference>
<dbReference type="GO" id="GO:0046872">
    <property type="term" value="F:metal ion binding"/>
    <property type="evidence" value="ECO:0007669"/>
    <property type="project" value="UniProtKB-KW"/>
</dbReference>
<dbReference type="GO" id="GO:0008081">
    <property type="term" value="F:phosphoric diester hydrolase activity"/>
    <property type="evidence" value="ECO:0007669"/>
    <property type="project" value="InterPro"/>
</dbReference>
<dbReference type="GO" id="GO:0090729">
    <property type="term" value="F:toxin activity"/>
    <property type="evidence" value="ECO:0007669"/>
    <property type="project" value="UniProtKB-KW"/>
</dbReference>
<dbReference type="GO" id="GO:0031640">
    <property type="term" value="P:killing of cells of another organism"/>
    <property type="evidence" value="ECO:0007669"/>
    <property type="project" value="UniProtKB-KW"/>
</dbReference>
<dbReference type="GO" id="GO:0016042">
    <property type="term" value="P:lipid catabolic process"/>
    <property type="evidence" value="ECO:0007669"/>
    <property type="project" value="UniProtKB-KW"/>
</dbReference>
<dbReference type="CDD" id="cd08576">
    <property type="entry name" value="GDPD_like_SMaseD_PLD"/>
    <property type="match status" value="1"/>
</dbReference>
<dbReference type="Gene3D" id="3.20.20.190">
    <property type="entry name" value="Phosphatidylinositol (PI) phosphodiesterase"/>
    <property type="match status" value="1"/>
</dbReference>
<dbReference type="InterPro" id="IPR017946">
    <property type="entry name" value="PLC-like_Pdiesterase_TIM-brl"/>
</dbReference>
<dbReference type="SUPFAM" id="SSF51695">
    <property type="entry name" value="PLC-like phosphodiesterases"/>
    <property type="match status" value="1"/>
</dbReference>
<accession>C0JAZ8</accession>
<reference key="1">
    <citation type="journal article" date="2009" name="Mol. Biol. Evol.">
        <title>Molecular evolution, functional variation, and proposed nomenclature of the gene family that includes sphingomyelinase D in sicariid spider venoms.</title>
        <authorList>
            <person name="Binford G.J."/>
            <person name="Bodner M.R."/>
            <person name="Cordes M.H."/>
            <person name="Baldwin K.L."/>
            <person name="Rynerson M.R."/>
            <person name="Burns S.N."/>
            <person name="Zobel-Thropp P.A."/>
        </authorList>
    </citation>
    <scope>NUCLEOTIDE SEQUENCE [MRNA]</scope>
    <scope>NOMENCLATURE</scope>
    <source>
        <tissue>Venom gland</tissue>
    </source>
</reference>
<organism>
    <name type="scientific">Loxosceles variegata</name>
    <name type="common">Recluse spider</name>
    <dbReference type="NCBI Taxonomy" id="571533"/>
    <lineage>
        <taxon>Eukaryota</taxon>
        <taxon>Metazoa</taxon>
        <taxon>Ecdysozoa</taxon>
        <taxon>Arthropoda</taxon>
        <taxon>Chelicerata</taxon>
        <taxon>Arachnida</taxon>
        <taxon>Araneae</taxon>
        <taxon>Araneomorphae</taxon>
        <taxon>Haplogynae</taxon>
        <taxon>Scytodoidea</taxon>
        <taxon>Sicariidae</taxon>
        <taxon>Loxosceles</taxon>
    </lineage>
</organism>
<sequence length="272" mass="30890">WIMGHMVNNIKQIDEFVNLGSNAIETDVSFDKKANPEYTYHGTPCDCGRDCLRWEYFNDFVKALRTATTPGNSKYDKLFLVVFDLKTGSLYDYQASEAGTKLAKNLLQHYRNNGNNGGRAYIILSIPNLKHFKLITGFQQTLKGEGHAELLDKVGYDFSGNDDIGDVQKIYEKAGVTGHVWQSDGITNCLLRGFTRINAAVANRDSANGIINKVYYWTVDKRQTTRDTLDANVDGIMTNYPDITVEILNEDAYKTKFRIATYEDNPWETFKE</sequence>
<proteinExistence type="evidence at transcript level"/>
<comment type="function">
    <text evidence="1 3">Dermonecrotic toxins cleave the phosphodiester linkage between the phosphate and headgroup of certain phospholipids (sphingolipid and lysolipid substrates), forming an alcohol (often choline) and a cyclic phosphate (By similarity). This toxin acts on sphingomyelin (SM) (By similarity). It may also act on ceramide phosphoethanolamine (CPE), lysophosphatidylcholine (LPC) and lysophosphatidylethanolamine (LPE), but not on lysophosphatidylserine (LPS), and lysophosphatidylglycerol (LPG) (By similarity). It acts by transphosphatidylation, releasing exclusively cyclic phosphate products as second products (By similarity). Induces dermonecrosis, hemolysis, increased vascular permeability, edema, inflammatory response, and platelet aggregation (By similarity).</text>
</comment>
<comment type="catalytic activity">
    <reaction evidence="1">
        <text>an N-(acyl)-sphingosylphosphocholine = an N-(acyl)-sphingosyl-1,3-cyclic phosphate + choline</text>
        <dbReference type="Rhea" id="RHEA:60652"/>
        <dbReference type="ChEBI" id="CHEBI:15354"/>
        <dbReference type="ChEBI" id="CHEBI:64583"/>
        <dbReference type="ChEBI" id="CHEBI:143892"/>
    </reaction>
</comment>
<comment type="catalytic activity">
    <reaction evidence="1">
        <text>an N-(acyl)-sphingosylphosphoethanolamine = an N-(acyl)-sphingosyl-1,3-cyclic phosphate + ethanolamine</text>
        <dbReference type="Rhea" id="RHEA:60648"/>
        <dbReference type="ChEBI" id="CHEBI:57603"/>
        <dbReference type="ChEBI" id="CHEBI:143891"/>
        <dbReference type="ChEBI" id="CHEBI:143892"/>
    </reaction>
</comment>
<comment type="catalytic activity">
    <reaction evidence="1">
        <text>a 1-acyl-sn-glycero-3-phosphocholine = a 1-acyl-sn-glycero-2,3-cyclic phosphate + choline</text>
        <dbReference type="Rhea" id="RHEA:60700"/>
        <dbReference type="ChEBI" id="CHEBI:15354"/>
        <dbReference type="ChEBI" id="CHEBI:58168"/>
        <dbReference type="ChEBI" id="CHEBI:143947"/>
    </reaction>
</comment>
<comment type="catalytic activity">
    <reaction evidence="1">
        <text>a 1-acyl-sn-glycero-3-phosphoethanolamine = a 1-acyl-sn-glycero-2,3-cyclic phosphate + ethanolamine</text>
        <dbReference type="Rhea" id="RHEA:60704"/>
        <dbReference type="ChEBI" id="CHEBI:57603"/>
        <dbReference type="ChEBI" id="CHEBI:64381"/>
        <dbReference type="ChEBI" id="CHEBI:143947"/>
    </reaction>
</comment>
<comment type="cofactor">
    <cofactor evidence="5">
        <name>Mg(2+)</name>
        <dbReference type="ChEBI" id="CHEBI:18420"/>
    </cofactor>
    <text evidence="5">Binds 1 Mg(2+) ion per subunit.</text>
</comment>
<comment type="subcellular location">
    <subcellularLocation>
        <location evidence="8">Secreted</location>
    </subcellularLocation>
</comment>
<comment type="tissue specificity">
    <text evidence="8">Expressed by the venom gland.</text>
</comment>
<comment type="similarity">
    <text evidence="7">Belongs to the arthropod phospholipase D family. Class II subfamily.</text>
</comment>
<comment type="caution">
    <text evidence="1 2 4">The most common activity assay for dermonecrotic toxins detects enzymatic activity by monitoring choline release from substrate. Liberation of choline from sphingomyelin (SM) or lysophosphatidylcholine (LPC) is commonly assumed to result from substrate hydrolysis, giving either ceramide-1-phosphate (C1P) or lysophosphatidic acid (LPA), respectively, as a second product. However, two studies from Lajoie and colleagues (2013 and 2015) report the observation of exclusive formation of cyclic phosphate products as second products, resulting from intramolecular transphosphatidylation. Cyclic phosphates have vastly different biological properties from their monoester counterparts, and they may be relevant to the pathology of brown spider envenomation.</text>
</comment>
<protein>
    <recommendedName>
        <fullName evidence="6">Dermonecrotic toxin LvSicTox-alphaIC1bv</fullName>
        <ecNumber evidence="4">4.6.1.-</ecNumber>
    </recommendedName>
    <alternativeName>
        <fullName>Phospholipase D</fullName>
        <shortName>PLD</shortName>
    </alternativeName>
    <alternativeName>
        <fullName>Sphingomyelin phosphodiesterase D</fullName>
        <shortName>SMD</shortName>
        <shortName>SMase D</shortName>
        <shortName>Sphingomyelinase D</shortName>
    </alternativeName>
</protein>